<dbReference type="EC" id="5.6.2.2" evidence="7"/>
<dbReference type="EMBL" id="AF149310">
    <property type="protein sequence ID" value="AAD44812.1"/>
    <property type="molecule type" value="mRNA"/>
</dbReference>
<dbReference type="EMBL" id="AF169385">
    <property type="protein sequence ID" value="AAD52562.1"/>
    <property type="molecule type" value="mRNA"/>
</dbReference>
<dbReference type="EMBL" id="AY957583">
    <property type="protein sequence ID" value="AAX44047.1"/>
    <property type="molecule type" value="Genomic_DNA"/>
</dbReference>
<dbReference type="EMBL" id="AL135939">
    <property type="status" value="NOT_ANNOTATED_CDS"/>
    <property type="molecule type" value="Genomic_DNA"/>
</dbReference>
<dbReference type="EMBL" id="BC033591">
    <property type="protein sequence ID" value="AAH33591.1"/>
    <property type="molecule type" value="mRNA"/>
</dbReference>
<dbReference type="CCDS" id="CCDS13456.1">
    <molecule id="Q9Y5K1-1"/>
</dbReference>
<dbReference type="CCDS" id="CCDS13457.1">
    <molecule id="Q9Y5K1-2"/>
</dbReference>
<dbReference type="RefSeq" id="NP_036576.1">
    <molecule id="Q9Y5K1-1"/>
    <property type="nucleotide sequence ID" value="NM_012444.3"/>
</dbReference>
<dbReference type="RefSeq" id="NP_937998.1">
    <molecule id="Q9Y5K1-2"/>
    <property type="nucleotide sequence ID" value="NM_198265.2"/>
</dbReference>
<dbReference type="SMR" id="Q9Y5K1"/>
<dbReference type="BioGRID" id="117158">
    <property type="interactions" value="8"/>
</dbReference>
<dbReference type="FunCoup" id="Q9Y5K1">
    <property type="interactions" value="127"/>
</dbReference>
<dbReference type="IntAct" id="Q9Y5K1">
    <property type="interactions" value="2"/>
</dbReference>
<dbReference type="STRING" id="9606.ENSP00000360310"/>
<dbReference type="GlyGen" id="Q9Y5K1">
    <property type="glycosylation" value="1 site, 1 O-linked glycan (1 site)"/>
</dbReference>
<dbReference type="iPTMnet" id="Q9Y5K1"/>
<dbReference type="PhosphoSitePlus" id="Q9Y5K1"/>
<dbReference type="BioMuta" id="SPO11"/>
<dbReference type="DMDM" id="7674367"/>
<dbReference type="MassIVE" id="Q9Y5K1"/>
<dbReference type="PaxDb" id="9606-ENSP00000360310"/>
<dbReference type="ProteomicsDB" id="86424">
    <molecule id="Q9Y5K1-1"/>
</dbReference>
<dbReference type="ProteomicsDB" id="86425">
    <molecule id="Q9Y5K1-2"/>
</dbReference>
<dbReference type="Antibodypedia" id="28951">
    <property type="antibodies" value="188 antibodies from 27 providers"/>
</dbReference>
<dbReference type="DNASU" id="23626"/>
<dbReference type="Ensembl" id="ENST00000345868.8">
    <molecule id="Q9Y5K1-2"/>
    <property type="protein sequence ID" value="ENSP00000316034.4"/>
    <property type="gene ID" value="ENSG00000054796.13"/>
</dbReference>
<dbReference type="Ensembl" id="ENST00000371263.8">
    <molecule id="Q9Y5K1-1"/>
    <property type="protein sequence ID" value="ENSP00000360310.3"/>
    <property type="gene ID" value="ENSG00000054796.13"/>
</dbReference>
<dbReference type="GeneID" id="23626"/>
<dbReference type="KEGG" id="hsa:23626"/>
<dbReference type="MANE-Select" id="ENST00000371263.8">
    <property type="protein sequence ID" value="ENSP00000360310.3"/>
    <property type="RefSeq nucleotide sequence ID" value="NM_012444.3"/>
    <property type="RefSeq protein sequence ID" value="NP_036576.1"/>
</dbReference>
<dbReference type="UCSC" id="uc002xye.4">
    <molecule id="Q9Y5K1-1"/>
    <property type="organism name" value="human"/>
</dbReference>
<dbReference type="AGR" id="HGNC:11250"/>
<dbReference type="CTD" id="23626"/>
<dbReference type="DisGeNET" id="23626"/>
<dbReference type="GeneCards" id="SPO11"/>
<dbReference type="HGNC" id="HGNC:11250">
    <property type="gene designation" value="SPO11"/>
</dbReference>
<dbReference type="HPA" id="ENSG00000054796">
    <property type="expression patterns" value="Tissue enriched (testis)"/>
</dbReference>
<dbReference type="MIM" id="605114">
    <property type="type" value="gene"/>
</dbReference>
<dbReference type="neXtProt" id="NX_Q9Y5K1"/>
<dbReference type="OpenTargets" id="ENSG00000054796"/>
<dbReference type="PharmGKB" id="PA36080"/>
<dbReference type="VEuPathDB" id="HostDB:ENSG00000054796"/>
<dbReference type="eggNOG" id="KOG2795">
    <property type="taxonomic scope" value="Eukaryota"/>
</dbReference>
<dbReference type="GeneTree" id="ENSGT00390000001787"/>
<dbReference type="InParanoid" id="Q9Y5K1"/>
<dbReference type="OMA" id="IETAGMF"/>
<dbReference type="OrthoDB" id="5377392at2759"/>
<dbReference type="PAN-GO" id="Q9Y5K1">
    <property type="GO annotations" value="5 GO annotations based on evolutionary models"/>
</dbReference>
<dbReference type="PhylomeDB" id="Q9Y5K1"/>
<dbReference type="TreeFam" id="TF314157"/>
<dbReference type="PathwayCommons" id="Q9Y5K1"/>
<dbReference type="Reactome" id="R-HSA-912446">
    <property type="pathway name" value="Meiotic recombination"/>
</dbReference>
<dbReference type="SignaLink" id="Q9Y5K1"/>
<dbReference type="BioGRID-ORCS" id="23626">
    <property type="hits" value="9 hits in 1148 CRISPR screens"/>
</dbReference>
<dbReference type="GenomeRNAi" id="23626"/>
<dbReference type="Pharos" id="Q9Y5K1">
    <property type="development level" value="Tbio"/>
</dbReference>
<dbReference type="PRO" id="PR:Q9Y5K1"/>
<dbReference type="Proteomes" id="UP000005640">
    <property type="component" value="Chromosome 20"/>
</dbReference>
<dbReference type="RNAct" id="Q9Y5K1">
    <property type="molecule type" value="protein"/>
</dbReference>
<dbReference type="Bgee" id="ENSG00000054796">
    <property type="expression patterns" value="Expressed in primordial germ cell in gonad and 23 other cell types or tissues"/>
</dbReference>
<dbReference type="ExpressionAtlas" id="Q9Y5K1">
    <property type="expression patterns" value="baseline and differential"/>
</dbReference>
<dbReference type="GO" id="GO:0000781">
    <property type="term" value="C:chromosome, telomeric region"/>
    <property type="evidence" value="ECO:0007669"/>
    <property type="project" value="Ensembl"/>
</dbReference>
<dbReference type="GO" id="GO:0000228">
    <property type="term" value="C:nuclear chromosome"/>
    <property type="evidence" value="ECO:0000318"/>
    <property type="project" value="GO_Central"/>
</dbReference>
<dbReference type="GO" id="GO:0005524">
    <property type="term" value="F:ATP binding"/>
    <property type="evidence" value="ECO:0007669"/>
    <property type="project" value="InterPro"/>
</dbReference>
<dbReference type="GO" id="GO:0003677">
    <property type="term" value="F:DNA binding"/>
    <property type="evidence" value="ECO:0000318"/>
    <property type="project" value="GO_Central"/>
</dbReference>
<dbReference type="GO" id="GO:0003918">
    <property type="term" value="F:DNA topoisomerase type II (double strand cut, ATP-hydrolyzing) activity"/>
    <property type="evidence" value="ECO:0007669"/>
    <property type="project" value="UniProtKB-EC"/>
</dbReference>
<dbReference type="GO" id="GO:0046872">
    <property type="term" value="F:metal ion binding"/>
    <property type="evidence" value="ECO:0007669"/>
    <property type="project" value="UniProtKB-KW"/>
</dbReference>
<dbReference type="GO" id="GO:1990918">
    <property type="term" value="P:double-strand break repair involved in meiotic recombination"/>
    <property type="evidence" value="ECO:0007669"/>
    <property type="project" value="Ensembl"/>
</dbReference>
<dbReference type="GO" id="GO:0007292">
    <property type="term" value="P:female gamete generation"/>
    <property type="evidence" value="ECO:0000304"/>
    <property type="project" value="ProtInc"/>
</dbReference>
<dbReference type="GO" id="GO:0007141">
    <property type="term" value="P:male meiosis I"/>
    <property type="evidence" value="ECO:0007669"/>
    <property type="project" value="Ensembl"/>
</dbReference>
<dbReference type="GO" id="GO:0042138">
    <property type="term" value="P:meiotic DNA double-strand break formation"/>
    <property type="evidence" value="ECO:0000318"/>
    <property type="project" value="GO_Central"/>
</dbReference>
<dbReference type="GO" id="GO:0000706">
    <property type="term" value="P:meiotic DNA double-strand break processing"/>
    <property type="evidence" value="ECO:0000318"/>
    <property type="project" value="GO_Central"/>
</dbReference>
<dbReference type="GO" id="GO:0045141">
    <property type="term" value="P:meiotic telomere clustering"/>
    <property type="evidence" value="ECO:0007669"/>
    <property type="project" value="Ensembl"/>
</dbReference>
<dbReference type="GO" id="GO:0048477">
    <property type="term" value="P:oogenesis"/>
    <property type="evidence" value="ECO:0007669"/>
    <property type="project" value="Ensembl"/>
</dbReference>
<dbReference type="GO" id="GO:0001541">
    <property type="term" value="P:ovarian follicle development"/>
    <property type="evidence" value="ECO:0007669"/>
    <property type="project" value="Ensembl"/>
</dbReference>
<dbReference type="GO" id="GO:0034502">
    <property type="term" value="P:protein localization to chromosome"/>
    <property type="evidence" value="ECO:0007669"/>
    <property type="project" value="Ensembl"/>
</dbReference>
<dbReference type="GO" id="GO:0007131">
    <property type="term" value="P:reciprocal meiotic recombination"/>
    <property type="evidence" value="ECO:0000318"/>
    <property type="project" value="GO_Central"/>
</dbReference>
<dbReference type="GO" id="GO:0007286">
    <property type="term" value="P:spermatid development"/>
    <property type="evidence" value="ECO:0007669"/>
    <property type="project" value="Ensembl"/>
</dbReference>
<dbReference type="GO" id="GO:0007283">
    <property type="term" value="P:spermatogenesis"/>
    <property type="evidence" value="ECO:0000304"/>
    <property type="project" value="ProtInc"/>
</dbReference>
<dbReference type="GO" id="GO:0007130">
    <property type="term" value="P:synaptonemal complex assembly"/>
    <property type="evidence" value="ECO:0007669"/>
    <property type="project" value="Ensembl"/>
</dbReference>
<dbReference type="CDD" id="cd00223">
    <property type="entry name" value="TOPRIM_TopoIIB_SPO"/>
    <property type="match status" value="1"/>
</dbReference>
<dbReference type="FunFam" id="3.40.1360.10:FF:000003">
    <property type="entry name" value="DNA topoisomerase 6 subunit A"/>
    <property type="match status" value="1"/>
</dbReference>
<dbReference type="FunFam" id="1.10.10.10:FF:000415">
    <property type="entry name" value="meiotic recombination protein SPO11 isoform X1"/>
    <property type="match status" value="1"/>
</dbReference>
<dbReference type="Gene3D" id="3.40.1360.10">
    <property type="match status" value="1"/>
</dbReference>
<dbReference type="Gene3D" id="1.10.10.10">
    <property type="entry name" value="Winged helix-like DNA-binding domain superfamily/Winged helix DNA-binding domain"/>
    <property type="match status" value="1"/>
</dbReference>
<dbReference type="InterPro" id="IPR004084">
    <property type="entry name" value="Meiosis_Spo11"/>
</dbReference>
<dbReference type="InterPro" id="IPR013048">
    <property type="entry name" value="Meiotic_Spo11"/>
</dbReference>
<dbReference type="InterPro" id="IPR002815">
    <property type="entry name" value="Spo11/TopoVI_A"/>
</dbReference>
<dbReference type="InterPro" id="IPR013049">
    <property type="entry name" value="Spo11/TopoVI_A_N"/>
</dbReference>
<dbReference type="InterPro" id="IPR036078">
    <property type="entry name" value="Spo11/TopoVI_A_sf"/>
</dbReference>
<dbReference type="InterPro" id="IPR034136">
    <property type="entry name" value="TOPRIM_Topo6A/Spo11"/>
</dbReference>
<dbReference type="InterPro" id="IPR036388">
    <property type="entry name" value="WH-like_DNA-bd_sf"/>
</dbReference>
<dbReference type="PANTHER" id="PTHR10848">
    <property type="entry name" value="MEIOTIC RECOMBINATION PROTEIN SPO11"/>
    <property type="match status" value="1"/>
</dbReference>
<dbReference type="PANTHER" id="PTHR10848:SF0">
    <property type="entry name" value="MEIOTIC RECOMBINATION PROTEIN SPO11"/>
    <property type="match status" value="1"/>
</dbReference>
<dbReference type="Pfam" id="PF03533">
    <property type="entry name" value="SPO11_like"/>
    <property type="match status" value="1"/>
</dbReference>
<dbReference type="Pfam" id="PF21180">
    <property type="entry name" value="TOP6A-Spo11_Toprim"/>
    <property type="match status" value="1"/>
</dbReference>
<dbReference type="Pfam" id="PF04406">
    <property type="entry name" value="TP6A_N"/>
    <property type="match status" value="1"/>
</dbReference>
<dbReference type="PRINTS" id="PR01551">
    <property type="entry name" value="SPO11HOMOLOG"/>
</dbReference>
<dbReference type="PRINTS" id="PR01550">
    <property type="entry name" value="TOP6AFAMILY"/>
</dbReference>
<dbReference type="SUPFAM" id="SSF56726">
    <property type="entry name" value="DNA topoisomerase IV, alpha subunit"/>
    <property type="match status" value="1"/>
</dbReference>
<dbReference type="PROSITE" id="PS52041">
    <property type="entry name" value="TOPO_IIB"/>
    <property type="match status" value="1"/>
</dbReference>
<organism>
    <name type="scientific">Homo sapiens</name>
    <name type="common">Human</name>
    <dbReference type="NCBI Taxonomy" id="9606"/>
    <lineage>
        <taxon>Eukaryota</taxon>
        <taxon>Metazoa</taxon>
        <taxon>Chordata</taxon>
        <taxon>Craniata</taxon>
        <taxon>Vertebrata</taxon>
        <taxon>Euteleostomi</taxon>
        <taxon>Mammalia</taxon>
        <taxon>Eutheria</taxon>
        <taxon>Euarchontoglires</taxon>
        <taxon>Primates</taxon>
        <taxon>Haplorrhini</taxon>
        <taxon>Catarrhini</taxon>
        <taxon>Hominidae</taxon>
        <taxon>Homo</taxon>
    </lineage>
</organism>
<sequence>MAFAPMGPEASFFDVLDRHRESLLAALRRGGREPPTGGSRLASSSEVLASIENIIQDIITSLARNEAPAFTIDNRSSWENIKFEDSVGLQMVSHCTTRKIKSDSPKSAQKFSLILKILSMIYKLVQSNTYATKRDIYYTDSQLFGNQTVVDNIINDISCMLKVSRRSLHILSTSKGLIAGNLRYIEEDGTKVNCTCGATAVAVPSNIQGIRNLVTDAKFVLIVEKDATFQRLLDDNFCNKLSPCIMITGKGVPDLNTRLLVKKLWDTFHVPVFTLVDADPHGIEIMCIYKYGSMSMSFEAHHLTVPAIRWLGLLPSDLKRLNVPKDSLIPLTKRDQMKLDSILRRPYVTCQPFWRKEMEIMADSKMKAEIQALTFLSSDYLSRVYLPNKLKFGGWI</sequence>
<gene>
    <name type="primary">SPO11</name>
</gene>
<evidence type="ECO:0000250" key="1"/>
<evidence type="ECO:0000250" key="2">
    <source>
        <dbReference type="UniProtKB" id="Q57815"/>
    </source>
</evidence>
<evidence type="ECO:0000250" key="3">
    <source>
        <dbReference type="UniProtKB" id="Q9WTK8"/>
    </source>
</evidence>
<evidence type="ECO:0000255" key="4">
    <source>
        <dbReference type="PROSITE-ProRule" id="PRU01385"/>
    </source>
</evidence>
<evidence type="ECO:0000269" key="5">
    <source ref="3"/>
</evidence>
<evidence type="ECO:0000303" key="6">
    <source>
    </source>
</evidence>
<evidence type="ECO:0000305" key="7"/>
<reference key="1">
    <citation type="journal article" date="1999" name="FEBS Lett.">
        <title>Differential gene expression of mammalian SPO11/TOP6A homologs during meiosis.</title>
        <authorList>
            <person name="Shannon M."/>
            <person name="Richardson L."/>
            <person name="Christian A."/>
            <person name="Handel M.A."/>
            <person name="Thelen M.P."/>
        </authorList>
    </citation>
    <scope>NUCLEOTIDE SEQUENCE [MRNA] (ISOFORM 1)</scope>
    <source>
        <tissue>Testis</tissue>
    </source>
</reference>
<reference key="2">
    <citation type="journal article" date="1999" name="Genomics">
        <title>Cloning, characterization, and localization of mouse and human SPO11.</title>
        <authorList>
            <person name="Romanienko P.J."/>
            <person name="Camerini-Otero R.D."/>
        </authorList>
    </citation>
    <scope>NUCLEOTIDE SEQUENCE [MRNA] (ISOFORM 1)</scope>
    <source>
        <tissue>Testis</tissue>
    </source>
</reference>
<reference key="3">
    <citation type="submission" date="2005-03" db="EMBL/GenBank/DDBJ databases">
        <authorList>
            <consortium name="NIEHS SNPs program"/>
        </authorList>
    </citation>
    <scope>NUCLEOTIDE SEQUENCE [GENOMIC DNA]</scope>
    <scope>VARIANT ALA-36</scope>
</reference>
<reference key="4">
    <citation type="journal article" date="2001" name="Nature">
        <title>The DNA sequence and comparative analysis of human chromosome 20.</title>
        <authorList>
            <person name="Deloukas P."/>
            <person name="Matthews L.H."/>
            <person name="Ashurst J.L."/>
            <person name="Burton J."/>
            <person name="Gilbert J.G.R."/>
            <person name="Jones M."/>
            <person name="Stavrides G."/>
            <person name="Almeida J.P."/>
            <person name="Babbage A.K."/>
            <person name="Bagguley C.L."/>
            <person name="Bailey J."/>
            <person name="Barlow K.F."/>
            <person name="Bates K.N."/>
            <person name="Beard L.M."/>
            <person name="Beare D.M."/>
            <person name="Beasley O.P."/>
            <person name="Bird C.P."/>
            <person name="Blakey S.E."/>
            <person name="Bridgeman A.M."/>
            <person name="Brown A.J."/>
            <person name="Buck D."/>
            <person name="Burrill W.D."/>
            <person name="Butler A.P."/>
            <person name="Carder C."/>
            <person name="Carter N.P."/>
            <person name="Chapman J.C."/>
            <person name="Clamp M."/>
            <person name="Clark G."/>
            <person name="Clark L.N."/>
            <person name="Clark S.Y."/>
            <person name="Clee C.M."/>
            <person name="Clegg S."/>
            <person name="Cobley V.E."/>
            <person name="Collier R.E."/>
            <person name="Connor R.E."/>
            <person name="Corby N.R."/>
            <person name="Coulson A."/>
            <person name="Coville G.J."/>
            <person name="Deadman R."/>
            <person name="Dhami P.D."/>
            <person name="Dunn M."/>
            <person name="Ellington A.G."/>
            <person name="Frankland J.A."/>
            <person name="Fraser A."/>
            <person name="French L."/>
            <person name="Garner P."/>
            <person name="Grafham D.V."/>
            <person name="Griffiths C."/>
            <person name="Griffiths M.N.D."/>
            <person name="Gwilliam R."/>
            <person name="Hall R.E."/>
            <person name="Hammond S."/>
            <person name="Harley J.L."/>
            <person name="Heath P.D."/>
            <person name="Ho S."/>
            <person name="Holden J.L."/>
            <person name="Howden P.J."/>
            <person name="Huckle E."/>
            <person name="Hunt A.R."/>
            <person name="Hunt S.E."/>
            <person name="Jekosch K."/>
            <person name="Johnson C.M."/>
            <person name="Johnson D."/>
            <person name="Kay M.P."/>
            <person name="Kimberley A.M."/>
            <person name="King A."/>
            <person name="Knights A."/>
            <person name="Laird G.K."/>
            <person name="Lawlor S."/>
            <person name="Lehvaeslaiho M.H."/>
            <person name="Leversha M.A."/>
            <person name="Lloyd C."/>
            <person name="Lloyd D.M."/>
            <person name="Lovell J.D."/>
            <person name="Marsh V.L."/>
            <person name="Martin S.L."/>
            <person name="McConnachie L.J."/>
            <person name="McLay K."/>
            <person name="McMurray A.A."/>
            <person name="Milne S.A."/>
            <person name="Mistry D."/>
            <person name="Moore M.J.F."/>
            <person name="Mullikin J.C."/>
            <person name="Nickerson T."/>
            <person name="Oliver K."/>
            <person name="Parker A."/>
            <person name="Patel R."/>
            <person name="Pearce T.A.V."/>
            <person name="Peck A.I."/>
            <person name="Phillimore B.J.C.T."/>
            <person name="Prathalingam S.R."/>
            <person name="Plumb R.W."/>
            <person name="Ramsay H."/>
            <person name="Rice C.M."/>
            <person name="Ross M.T."/>
            <person name="Scott C.E."/>
            <person name="Sehra H.K."/>
            <person name="Shownkeen R."/>
            <person name="Sims S."/>
            <person name="Skuce C.D."/>
            <person name="Smith M.L."/>
            <person name="Soderlund C."/>
            <person name="Steward C.A."/>
            <person name="Sulston J.E."/>
            <person name="Swann R.M."/>
            <person name="Sycamore N."/>
            <person name="Taylor R."/>
            <person name="Tee L."/>
            <person name="Thomas D.W."/>
            <person name="Thorpe A."/>
            <person name="Tracey A."/>
            <person name="Tromans A.C."/>
            <person name="Vaudin M."/>
            <person name="Wall M."/>
            <person name="Wallis J.M."/>
            <person name="Whitehead S.L."/>
            <person name="Whittaker P."/>
            <person name="Willey D.L."/>
            <person name="Williams L."/>
            <person name="Williams S.A."/>
            <person name="Wilming L."/>
            <person name="Wray P.W."/>
            <person name="Hubbard T."/>
            <person name="Durbin R.M."/>
            <person name="Bentley D.R."/>
            <person name="Beck S."/>
            <person name="Rogers J."/>
        </authorList>
    </citation>
    <scope>NUCLEOTIDE SEQUENCE [LARGE SCALE GENOMIC DNA]</scope>
</reference>
<reference key="5">
    <citation type="journal article" date="2004" name="Genome Res.">
        <title>The status, quality, and expansion of the NIH full-length cDNA project: the Mammalian Gene Collection (MGC).</title>
        <authorList>
            <consortium name="The MGC Project Team"/>
        </authorList>
    </citation>
    <scope>NUCLEOTIDE SEQUENCE [LARGE SCALE MRNA] (ISOFORM 2)</scope>
    <source>
        <tissue>Brain</tissue>
    </source>
</reference>
<accession>Q9Y5K1</accession>
<accession>Q5TCI1</accession>
<accession>Q8N4V0</accession>
<accession>Q9NQM7</accession>
<accession>Q9NQM8</accession>
<protein>
    <recommendedName>
        <fullName>Meiotic recombination protein SPO11</fullName>
        <ecNumber evidence="7">5.6.2.2</ecNumber>
    </recommendedName>
    <alternativeName>
        <fullName>Cancer/testis antigen 35</fullName>
        <shortName>CT35</shortName>
    </alternativeName>
</protein>
<name>SPO11_HUMAN</name>
<keyword id="KW-0025">Alternative splicing</keyword>
<keyword id="KW-0238">DNA-binding</keyword>
<keyword id="KW-0413">Isomerase</keyword>
<keyword id="KW-0460">Magnesium</keyword>
<keyword id="KW-0469">Meiosis</keyword>
<keyword id="KW-0479">Metal-binding</keyword>
<keyword id="KW-0539">Nucleus</keyword>
<keyword id="KW-1185">Reference proteome</keyword>
<keyword id="KW-0799">Topoisomerase</keyword>
<proteinExistence type="evidence at protein level"/>
<feature type="chain" id="PRO_0000145474" description="Meiotic recombination protein SPO11">
    <location>
        <begin position="1"/>
        <end position="396"/>
    </location>
</feature>
<feature type="domain" description="Topo IIA-type catalytic" evidence="4">
    <location>
        <begin position="42"/>
        <end position="177"/>
    </location>
</feature>
<feature type="active site" description="O-(5'-phospho-DNA)-tyrosine intermediate" evidence="4">
    <location>
        <position position="138"/>
    </location>
</feature>
<feature type="binding site" evidence="2">
    <location>
        <position position="224"/>
    </location>
    <ligand>
        <name>Mg(2+)</name>
        <dbReference type="ChEBI" id="CHEBI:18420"/>
    </ligand>
</feature>
<feature type="binding site" evidence="2">
    <location>
        <position position="277"/>
    </location>
    <ligand>
        <name>Mg(2+)</name>
        <dbReference type="ChEBI" id="CHEBI:18420"/>
    </ligand>
</feature>
<feature type="splice variant" id="VSP_006533" description="In isoform 2." evidence="6">
    <original>SSEVLASIENIIQDIITSLARNEAPAFTIDNRSSWENIK</original>
    <variation>R</variation>
    <location>
        <begin position="44"/>
        <end position="82"/>
    </location>
</feature>
<feature type="sequence variant" id="VAR_023307" description="In dbSNP:rs28368062." evidence="5">
    <original>T</original>
    <variation>A</variation>
    <location>
        <position position="36"/>
    </location>
</feature>
<feature type="sequence variant" id="VAR_052596" description="In dbSNP:rs3736832.">
    <original>M</original>
    <variation>V</variation>
    <location>
        <position position="91"/>
    </location>
</feature>
<feature type="sequence variant" id="VAR_052597" description="In dbSNP:rs17406460.">
    <original>A</original>
    <variation>V</variation>
    <location>
        <position position="202"/>
    </location>
</feature>
<feature type="sequence variant" id="VAR_029246" description="In dbSNP:rs28368082.">
    <original>R</original>
    <variation>W</variation>
    <location>
        <position position="211"/>
    </location>
</feature>
<comment type="function">
    <text evidence="3">Component of a topoisomerase 6 complex specifically required for meiotic recombination. Together with TOP6BL, mediates DNA cleavage that forms the double-strand breaks (DSB) that initiate meiotic recombination. The complex promotes relaxation of negative and positive supercoiled DNA and DNA decatenation through cleavage and ligation cycles. Essential for the phosphorylation of SMC3, HORMAD1 and HORMAD2.</text>
</comment>
<comment type="catalytic activity">
    <reaction evidence="4 7">
        <text>ATP-dependent breakage, passage and rejoining of double-stranded DNA.</text>
        <dbReference type="EC" id="5.6.2.2"/>
    </reaction>
</comment>
<comment type="cofactor">
    <cofactor evidence="2">
        <name>Mg(2+)</name>
        <dbReference type="ChEBI" id="CHEBI:18420"/>
    </cofactor>
</comment>
<comment type="subunit">
    <text evidence="3">Heterotetramer of SPO11 and 2 TOP6BL chains. Interacts with TOP6BL.</text>
</comment>
<comment type="interaction">
    <interactant intactId="EBI-12354035">
        <id>Q9Y5K1-2</id>
    </interactant>
    <interactant intactId="EBI-13636688">
        <id>P15884-3</id>
        <label>TCF4</label>
    </interactant>
    <organismsDiffer>false</organismsDiffer>
    <experiments>3</experiments>
</comment>
<comment type="subcellular location">
    <subcellularLocation>
        <location evidence="1">Nucleus</location>
    </subcellularLocation>
</comment>
<comment type="alternative products">
    <event type="alternative splicing"/>
    <isoform>
        <id>Q9Y5K1-1</id>
        <name>1</name>
        <sequence type="displayed"/>
    </isoform>
    <isoform>
        <id>Q9Y5K1-2</id>
        <name>2</name>
        <sequence type="described" ref="VSP_006533"/>
    </isoform>
</comment>
<comment type="tissue specificity">
    <text>Highly expressed in testis.</text>
</comment>
<comment type="similarity">
    <text evidence="7">Belongs to the TOP6A family.</text>
</comment>